<dbReference type="EC" id="6.3.5.5" evidence="1"/>
<dbReference type="EMBL" id="CP000872">
    <property type="protein sequence ID" value="ABX62547.1"/>
    <property type="molecule type" value="Genomic_DNA"/>
</dbReference>
<dbReference type="RefSeq" id="WP_004691011.1">
    <property type="nucleotide sequence ID" value="NC_010103.1"/>
</dbReference>
<dbReference type="SMR" id="A9M6F1"/>
<dbReference type="GeneID" id="55591131"/>
<dbReference type="KEGG" id="bcs:BCAN_A1521"/>
<dbReference type="HOGENOM" id="CLU_035901_2_2_5"/>
<dbReference type="PhylomeDB" id="A9M6F1"/>
<dbReference type="UniPathway" id="UPA00068">
    <property type="reaction ID" value="UER00171"/>
</dbReference>
<dbReference type="UniPathway" id="UPA00070">
    <property type="reaction ID" value="UER00115"/>
</dbReference>
<dbReference type="Proteomes" id="UP000001385">
    <property type="component" value="Chromosome I"/>
</dbReference>
<dbReference type="GO" id="GO:0005524">
    <property type="term" value="F:ATP binding"/>
    <property type="evidence" value="ECO:0007669"/>
    <property type="project" value="UniProtKB-UniRule"/>
</dbReference>
<dbReference type="GO" id="GO:0004088">
    <property type="term" value="F:carbamoyl-phosphate synthase (glutamine-hydrolyzing) activity"/>
    <property type="evidence" value="ECO:0007669"/>
    <property type="project" value="UniProtKB-UniRule"/>
</dbReference>
<dbReference type="GO" id="GO:0004359">
    <property type="term" value="F:glutaminase activity"/>
    <property type="evidence" value="ECO:0007669"/>
    <property type="project" value="RHEA"/>
</dbReference>
<dbReference type="GO" id="GO:0006207">
    <property type="term" value="P:'de novo' pyrimidine nucleobase biosynthetic process"/>
    <property type="evidence" value="ECO:0007669"/>
    <property type="project" value="InterPro"/>
</dbReference>
<dbReference type="GO" id="GO:0044205">
    <property type="term" value="P:'de novo' UMP biosynthetic process"/>
    <property type="evidence" value="ECO:0007669"/>
    <property type="project" value="UniProtKB-UniRule"/>
</dbReference>
<dbReference type="GO" id="GO:0006541">
    <property type="term" value="P:glutamine metabolic process"/>
    <property type="evidence" value="ECO:0007669"/>
    <property type="project" value="InterPro"/>
</dbReference>
<dbReference type="GO" id="GO:0006526">
    <property type="term" value="P:L-arginine biosynthetic process"/>
    <property type="evidence" value="ECO:0007669"/>
    <property type="project" value="UniProtKB-UniRule"/>
</dbReference>
<dbReference type="CDD" id="cd01744">
    <property type="entry name" value="GATase1_CPSase"/>
    <property type="match status" value="1"/>
</dbReference>
<dbReference type="FunFam" id="3.50.30.20:FF:000001">
    <property type="entry name" value="Carbamoyl-phosphate synthase small chain"/>
    <property type="match status" value="1"/>
</dbReference>
<dbReference type="Gene3D" id="3.40.50.880">
    <property type="match status" value="1"/>
</dbReference>
<dbReference type="Gene3D" id="3.50.30.20">
    <property type="entry name" value="Carbamoyl-phosphate synthase small subunit, N-terminal domain"/>
    <property type="match status" value="1"/>
</dbReference>
<dbReference type="HAMAP" id="MF_01209">
    <property type="entry name" value="CPSase_S_chain"/>
    <property type="match status" value="1"/>
</dbReference>
<dbReference type="InterPro" id="IPR050472">
    <property type="entry name" value="Anth_synth/Amidotransfase"/>
</dbReference>
<dbReference type="InterPro" id="IPR006274">
    <property type="entry name" value="CarbamoylP_synth_ssu"/>
</dbReference>
<dbReference type="InterPro" id="IPR002474">
    <property type="entry name" value="CarbamoylP_synth_ssu_N"/>
</dbReference>
<dbReference type="InterPro" id="IPR036480">
    <property type="entry name" value="CarbP_synth_ssu_N_sf"/>
</dbReference>
<dbReference type="InterPro" id="IPR029062">
    <property type="entry name" value="Class_I_gatase-like"/>
</dbReference>
<dbReference type="InterPro" id="IPR035686">
    <property type="entry name" value="CPSase_GATase1"/>
</dbReference>
<dbReference type="InterPro" id="IPR017926">
    <property type="entry name" value="GATASE"/>
</dbReference>
<dbReference type="NCBIfam" id="TIGR01368">
    <property type="entry name" value="CPSaseIIsmall"/>
    <property type="match status" value="1"/>
</dbReference>
<dbReference type="NCBIfam" id="NF009475">
    <property type="entry name" value="PRK12838.1"/>
    <property type="match status" value="1"/>
</dbReference>
<dbReference type="PANTHER" id="PTHR43418:SF7">
    <property type="entry name" value="CARBAMOYL-PHOSPHATE SYNTHASE SMALL CHAIN"/>
    <property type="match status" value="1"/>
</dbReference>
<dbReference type="PANTHER" id="PTHR43418">
    <property type="entry name" value="MULTIFUNCTIONAL TRYPTOPHAN BIOSYNTHESIS PROTEIN-RELATED"/>
    <property type="match status" value="1"/>
</dbReference>
<dbReference type="Pfam" id="PF00988">
    <property type="entry name" value="CPSase_sm_chain"/>
    <property type="match status" value="1"/>
</dbReference>
<dbReference type="Pfam" id="PF00117">
    <property type="entry name" value="GATase"/>
    <property type="match status" value="1"/>
</dbReference>
<dbReference type="PRINTS" id="PR00097">
    <property type="entry name" value="ANTSNTHASEII"/>
</dbReference>
<dbReference type="PRINTS" id="PR00099">
    <property type="entry name" value="CPSGATASE"/>
</dbReference>
<dbReference type="PRINTS" id="PR00096">
    <property type="entry name" value="GATASE"/>
</dbReference>
<dbReference type="SMART" id="SM01097">
    <property type="entry name" value="CPSase_sm_chain"/>
    <property type="match status" value="1"/>
</dbReference>
<dbReference type="SUPFAM" id="SSF52021">
    <property type="entry name" value="Carbamoyl phosphate synthetase, small subunit N-terminal domain"/>
    <property type="match status" value="1"/>
</dbReference>
<dbReference type="SUPFAM" id="SSF52317">
    <property type="entry name" value="Class I glutamine amidotransferase-like"/>
    <property type="match status" value="1"/>
</dbReference>
<dbReference type="PROSITE" id="PS51273">
    <property type="entry name" value="GATASE_TYPE_1"/>
    <property type="match status" value="1"/>
</dbReference>
<accession>A9M6F1</accession>
<proteinExistence type="inferred from homology"/>
<sequence>MTETTPKTAPWTVQKRTAVLVLADGTVIEGKGLGATGAVEAEVVFNTALTGYEEILTDPSYAGQIVTFTFPHIGNVGANAEDIEDLTPANRHGAVGAIFKADITAPSNFRAAEDLDSWLKHRGIIALAGIDTRALTALIRERGAQNAVIAHDPNGNFDLDALKARAANWCGLENLDLAKDVTIGQSLVWKELPWTLQDGYGEQDAPQYHVVALDFGVKRNILRLLTGLGAKVTVLPATATAEDVLAHNPDGVFLSNGPGDPAATGEYAVPTIGKLVETGIPLFGICLGHQMLALALGGRTEKMHQGHHGANHPVKDYTTGKVEIVSMNHGFAVDSDSLPENVEETHVSLFDGTNCGLRVVGKPVFSVQHHPEASPGPQDSHYLFRRFINLIRERKGQAPLPEREQAA</sequence>
<evidence type="ECO:0000255" key="1">
    <source>
        <dbReference type="HAMAP-Rule" id="MF_01209"/>
    </source>
</evidence>
<feature type="chain" id="PRO_1000138855" description="Carbamoyl phosphate synthase small chain">
    <location>
        <begin position="1"/>
        <end position="407"/>
    </location>
</feature>
<feature type="domain" description="Glutamine amidotransferase type-1" evidence="1">
    <location>
        <begin position="209"/>
        <end position="397"/>
    </location>
</feature>
<feature type="region of interest" description="CPSase" evidence="1">
    <location>
        <begin position="1"/>
        <end position="205"/>
    </location>
</feature>
<feature type="active site" description="Nucleophile" evidence="1">
    <location>
        <position position="286"/>
    </location>
</feature>
<feature type="active site" evidence="1">
    <location>
        <position position="370"/>
    </location>
</feature>
<feature type="active site" evidence="1">
    <location>
        <position position="372"/>
    </location>
</feature>
<feature type="binding site" evidence="1">
    <location>
        <position position="60"/>
    </location>
    <ligand>
        <name>L-glutamine</name>
        <dbReference type="ChEBI" id="CHEBI:58359"/>
    </ligand>
</feature>
<feature type="binding site" evidence="1">
    <location>
        <position position="257"/>
    </location>
    <ligand>
        <name>L-glutamine</name>
        <dbReference type="ChEBI" id="CHEBI:58359"/>
    </ligand>
</feature>
<feature type="binding site" evidence="1">
    <location>
        <position position="259"/>
    </location>
    <ligand>
        <name>L-glutamine</name>
        <dbReference type="ChEBI" id="CHEBI:58359"/>
    </ligand>
</feature>
<feature type="binding site" evidence="1">
    <location>
        <position position="287"/>
    </location>
    <ligand>
        <name>L-glutamine</name>
        <dbReference type="ChEBI" id="CHEBI:58359"/>
    </ligand>
</feature>
<feature type="binding site" evidence="1">
    <location>
        <position position="290"/>
    </location>
    <ligand>
        <name>L-glutamine</name>
        <dbReference type="ChEBI" id="CHEBI:58359"/>
    </ligand>
</feature>
<feature type="binding site" evidence="1">
    <location>
        <position position="328"/>
    </location>
    <ligand>
        <name>L-glutamine</name>
        <dbReference type="ChEBI" id="CHEBI:58359"/>
    </ligand>
</feature>
<feature type="binding site" evidence="1">
    <location>
        <position position="330"/>
    </location>
    <ligand>
        <name>L-glutamine</name>
        <dbReference type="ChEBI" id="CHEBI:58359"/>
    </ligand>
</feature>
<feature type="binding site" evidence="1">
    <location>
        <position position="331"/>
    </location>
    <ligand>
        <name>L-glutamine</name>
        <dbReference type="ChEBI" id="CHEBI:58359"/>
    </ligand>
</feature>
<keyword id="KW-0028">Amino-acid biosynthesis</keyword>
<keyword id="KW-0055">Arginine biosynthesis</keyword>
<keyword id="KW-0067">ATP-binding</keyword>
<keyword id="KW-0315">Glutamine amidotransferase</keyword>
<keyword id="KW-0436">Ligase</keyword>
<keyword id="KW-0547">Nucleotide-binding</keyword>
<keyword id="KW-0665">Pyrimidine biosynthesis</keyword>
<keyword id="KW-1185">Reference proteome</keyword>
<comment type="function">
    <text evidence="1">Small subunit of the glutamine-dependent carbamoyl phosphate synthetase (CPSase). CPSase catalyzes the formation of carbamoyl phosphate from the ammonia moiety of glutamine, carbonate, and phosphate donated by ATP, constituting the first step of 2 biosynthetic pathways, one leading to arginine and/or urea and the other to pyrimidine nucleotides. The small subunit (glutamine amidotransferase) binds and cleaves glutamine to supply the large subunit with the substrate ammonia.</text>
</comment>
<comment type="catalytic activity">
    <reaction evidence="1">
        <text>hydrogencarbonate + L-glutamine + 2 ATP + H2O = carbamoyl phosphate + L-glutamate + 2 ADP + phosphate + 2 H(+)</text>
        <dbReference type="Rhea" id="RHEA:18633"/>
        <dbReference type="ChEBI" id="CHEBI:15377"/>
        <dbReference type="ChEBI" id="CHEBI:15378"/>
        <dbReference type="ChEBI" id="CHEBI:17544"/>
        <dbReference type="ChEBI" id="CHEBI:29985"/>
        <dbReference type="ChEBI" id="CHEBI:30616"/>
        <dbReference type="ChEBI" id="CHEBI:43474"/>
        <dbReference type="ChEBI" id="CHEBI:58228"/>
        <dbReference type="ChEBI" id="CHEBI:58359"/>
        <dbReference type="ChEBI" id="CHEBI:456216"/>
        <dbReference type="EC" id="6.3.5.5"/>
    </reaction>
</comment>
<comment type="catalytic activity">
    <molecule>Carbamoyl phosphate synthase small chain</molecule>
    <reaction evidence="1">
        <text>L-glutamine + H2O = L-glutamate + NH4(+)</text>
        <dbReference type="Rhea" id="RHEA:15889"/>
        <dbReference type="ChEBI" id="CHEBI:15377"/>
        <dbReference type="ChEBI" id="CHEBI:28938"/>
        <dbReference type="ChEBI" id="CHEBI:29985"/>
        <dbReference type="ChEBI" id="CHEBI:58359"/>
    </reaction>
</comment>
<comment type="pathway">
    <text evidence="1">Amino-acid biosynthesis; L-arginine biosynthesis; carbamoyl phosphate from bicarbonate: step 1/1.</text>
</comment>
<comment type="pathway">
    <text evidence="1">Pyrimidine metabolism; UMP biosynthesis via de novo pathway; (S)-dihydroorotate from bicarbonate: step 1/3.</text>
</comment>
<comment type="subunit">
    <text evidence="1">Composed of two chains; the small (or glutamine) chain promotes the hydrolysis of glutamine to ammonia, which is used by the large (or ammonia) chain to synthesize carbamoyl phosphate. Tetramer of heterodimers (alpha,beta)4.</text>
</comment>
<comment type="similarity">
    <text evidence="1">Belongs to the CarA family.</text>
</comment>
<protein>
    <recommendedName>
        <fullName evidence="1">Carbamoyl phosphate synthase small chain</fullName>
        <ecNumber evidence="1">6.3.5.5</ecNumber>
    </recommendedName>
    <alternativeName>
        <fullName evidence="1">Carbamoyl phosphate synthetase glutamine chain</fullName>
    </alternativeName>
</protein>
<name>CARA_BRUC2</name>
<gene>
    <name evidence="1" type="primary">carA</name>
    <name type="ordered locus">BCAN_A1521</name>
</gene>
<organism>
    <name type="scientific">Brucella canis (strain ATCC 23365 / NCTC 10854 / RM-666)</name>
    <dbReference type="NCBI Taxonomy" id="483179"/>
    <lineage>
        <taxon>Bacteria</taxon>
        <taxon>Pseudomonadati</taxon>
        <taxon>Pseudomonadota</taxon>
        <taxon>Alphaproteobacteria</taxon>
        <taxon>Hyphomicrobiales</taxon>
        <taxon>Brucellaceae</taxon>
        <taxon>Brucella/Ochrobactrum group</taxon>
        <taxon>Brucella</taxon>
    </lineage>
</organism>
<reference key="1">
    <citation type="submission" date="2007-10" db="EMBL/GenBank/DDBJ databases">
        <title>Brucella canis ATCC 23365 whole genome shotgun sequencing project.</title>
        <authorList>
            <person name="Setubal J.C."/>
            <person name="Bowns C."/>
            <person name="Boyle S."/>
            <person name="Crasta O.R."/>
            <person name="Czar M.J."/>
            <person name="Dharmanolla C."/>
            <person name="Gillespie J.J."/>
            <person name="Kenyon R.W."/>
            <person name="Lu J."/>
            <person name="Mane S."/>
            <person name="Mohapatra S."/>
            <person name="Nagrani S."/>
            <person name="Purkayastha A."/>
            <person name="Rajasimha H.K."/>
            <person name="Shallom J.M."/>
            <person name="Shallom S."/>
            <person name="Shukla M."/>
            <person name="Snyder E.E."/>
            <person name="Sobral B.W."/>
            <person name="Wattam A.R."/>
            <person name="Will R."/>
            <person name="Williams K."/>
            <person name="Yoo H."/>
            <person name="Bruce D."/>
            <person name="Detter C."/>
            <person name="Munk C."/>
            <person name="Brettin T.S."/>
        </authorList>
    </citation>
    <scope>NUCLEOTIDE SEQUENCE [LARGE SCALE GENOMIC DNA]</scope>
    <source>
        <strain>ATCC 23365 / NCTC 10854 / RM-666</strain>
    </source>
</reference>